<accession>Q3B5C9</accession>
<comment type="function">
    <text evidence="1">Required for rescue of stalled ribosomes mediated by trans-translation. Binds to transfer-messenger RNA (tmRNA), required for stable association of tmRNA with ribosomes. tmRNA and SmpB together mimic tRNA shape, replacing the anticodon stem-loop with SmpB. tmRNA is encoded by the ssrA gene; the 2 termini fold to resemble tRNA(Ala) and it encodes a 'tag peptide', a short internal open reading frame. During trans-translation Ala-aminoacylated tmRNA acts like a tRNA, entering the A-site of stalled ribosomes, displacing the stalled mRNA. The ribosome then switches to translate the ORF on the tmRNA; the nascent peptide is terminated with the 'tag peptide' encoded by the tmRNA and targeted for degradation. The ribosome is freed to recommence translation, which seems to be the essential function of trans-translation.</text>
</comment>
<comment type="subcellular location">
    <subcellularLocation>
        <location evidence="1">Cytoplasm</location>
    </subcellularLocation>
    <text evidence="1">The tmRNA-SmpB complex associates with stalled 70S ribosomes.</text>
</comment>
<comment type="similarity">
    <text evidence="1">Belongs to the SmpB family.</text>
</comment>
<protein>
    <recommendedName>
        <fullName evidence="1">SsrA-binding protein</fullName>
    </recommendedName>
    <alternativeName>
        <fullName evidence="1">Small protein B</fullName>
    </alternativeName>
</protein>
<feature type="chain" id="PRO_1000002101" description="SsrA-binding protein">
    <location>
        <begin position="1"/>
        <end position="157"/>
    </location>
</feature>
<reference key="1">
    <citation type="submission" date="2005-08" db="EMBL/GenBank/DDBJ databases">
        <title>Complete sequence of Pelodictyon luteolum DSM 273.</title>
        <authorList>
            <consortium name="US DOE Joint Genome Institute"/>
            <person name="Copeland A."/>
            <person name="Lucas S."/>
            <person name="Lapidus A."/>
            <person name="Barry K."/>
            <person name="Detter J.C."/>
            <person name="Glavina T."/>
            <person name="Hammon N."/>
            <person name="Israni S."/>
            <person name="Pitluck S."/>
            <person name="Bryant D."/>
            <person name="Schmutz J."/>
            <person name="Larimer F."/>
            <person name="Land M."/>
            <person name="Kyrpides N."/>
            <person name="Ivanova N."/>
            <person name="Richardson P."/>
        </authorList>
    </citation>
    <scope>NUCLEOTIDE SEQUENCE [LARGE SCALE GENOMIC DNA]</scope>
    <source>
        <strain>DSM 273 / BCRC 81028 / 2530</strain>
    </source>
</reference>
<organism>
    <name type="scientific">Chlorobium luteolum (strain DSM 273 / BCRC 81028 / 2530)</name>
    <name type="common">Pelodictyon luteolum</name>
    <dbReference type="NCBI Taxonomy" id="319225"/>
    <lineage>
        <taxon>Bacteria</taxon>
        <taxon>Pseudomonadati</taxon>
        <taxon>Chlorobiota</taxon>
        <taxon>Chlorobiia</taxon>
        <taxon>Chlorobiales</taxon>
        <taxon>Chlorobiaceae</taxon>
        <taxon>Chlorobium/Pelodictyon group</taxon>
        <taxon>Pelodictyon</taxon>
    </lineage>
</organism>
<evidence type="ECO:0000255" key="1">
    <source>
        <dbReference type="HAMAP-Rule" id="MF_00023"/>
    </source>
</evidence>
<keyword id="KW-0963">Cytoplasm</keyword>
<keyword id="KW-1185">Reference proteome</keyword>
<keyword id="KW-0694">RNA-binding</keyword>
<proteinExistence type="inferred from homology"/>
<gene>
    <name evidence="1" type="primary">smpB</name>
    <name type="ordered locus">Plut_0569</name>
</gene>
<name>SSRP_CHLL3</name>
<sequence length="157" mass="18515">MAKKQQTRSYTEAIQNRKARYEYQILETIVAGIELLGSEVKSVRLGKASLNESFATIHHDEVWLENMQITPYEFNHLDALEPKRSRKLLLHKEEIRRLQSKINEKGLTLIPLKAFFDKNGRLKVELALAKGKKLYDKRETIKGRENERHLQQLRKQY</sequence>
<dbReference type="EMBL" id="CP000096">
    <property type="protein sequence ID" value="ABB23452.1"/>
    <property type="molecule type" value="Genomic_DNA"/>
</dbReference>
<dbReference type="RefSeq" id="WP_011357327.1">
    <property type="nucleotide sequence ID" value="NC_007512.1"/>
</dbReference>
<dbReference type="SMR" id="Q3B5C9"/>
<dbReference type="STRING" id="319225.Plut_0569"/>
<dbReference type="KEGG" id="plt:Plut_0569"/>
<dbReference type="eggNOG" id="COG0691">
    <property type="taxonomic scope" value="Bacteria"/>
</dbReference>
<dbReference type="HOGENOM" id="CLU_108953_0_1_10"/>
<dbReference type="OrthoDB" id="9805462at2"/>
<dbReference type="Proteomes" id="UP000002709">
    <property type="component" value="Chromosome"/>
</dbReference>
<dbReference type="GO" id="GO:0005829">
    <property type="term" value="C:cytosol"/>
    <property type="evidence" value="ECO:0007669"/>
    <property type="project" value="TreeGrafter"/>
</dbReference>
<dbReference type="GO" id="GO:0003723">
    <property type="term" value="F:RNA binding"/>
    <property type="evidence" value="ECO:0007669"/>
    <property type="project" value="UniProtKB-UniRule"/>
</dbReference>
<dbReference type="GO" id="GO:0070929">
    <property type="term" value="P:trans-translation"/>
    <property type="evidence" value="ECO:0007669"/>
    <property type="project" value="UniProtKB-UniRule"/>
</dbReference>
<dbReference type="CDD" id="cd09294">
    <property type="entry name" value="SmpB"/>
    <property type="match status" value="1"/>
</dbReference>
<dbReference type="Gene3D" id="2.40.280.10">
    <property type="match status" value="1"/>
</dbReference>
<dbReference type="HAMAP" id="MF_00023">
    <property type="entry name" value="SmpB"/>
    <property type="match status" value="1"/>
</dbReference>
<dbReference type="InterPro" id="IPR023620">
    <property type="entry name" value="SmpB"/>
</dbReference>
<dbReference type="InterPro" id="IPR000037">
    <property type="entry name" value="SsrA-bd_prot"/>
</dbReference>
<dbReference type="InterPro" id="IPR020081">
    <property type="entry name" value="SsrA-bd_prot_CS"/>
</dbReference>
<dbReference type="NCBIfam" id="NF003843">
    <property type="entry name" value="PRK05422.1"/>
    <property type="match status" value="1"/>
</dbReference>
<dbReference type="NCBIfam" id="TIGR00086">
    <property type="entry name" value="smpB"/>
    <property type="match status" value="1"/>
</dbReference>
<dbReference type="PANTHER" id="PTHR30308:SF2">
    <property type="entry name" value="SSRA-BINDING PROTEIN"/>
    <property type="match status" value="1"/>
</dbReference>
<dbReference type="PANTHER" id="PTHR30308">
    <property type="entry name" value="TMRNA-BINDING COMPONENT OF TRANS-TRANSLATION TAGGING COMPLEX"/>
    <property type="match status" value="1"/>
</dbReference>
<dbReference type="Pfam" id="PF01668">
    <property type="entry name" value="SmpB"/>
    <property type="match status" value="1"/>
</dbReference>
<dbReference type="SUPFAM" id="SSF74982">
    <property type="entry name" value="Small protein B (SmpB)"/>
    <property type="match status" value="1"/>
</dbReference>
<dbReference type="PROSITE" id="PS01317">
    <property type="entry name" value="SSRP"/>
    <property type="match status" value="1"/>
</dbReference>